<accession>P40214</accession>
<accession>D6VZW6</accession>
<protein>
    <recommendedName>
        <fullName evidence="4">Protein FDO1</fullName>
    </recommendedName>
    <alternativeName>
        <fullName evidence="4">FKH1-interacting protein involved in donor preference</fullName>
    </alternativeName>
</protein>
<organism>
    <name type="scientific">Saccharomyces cerevisiae (strain ATCC 204508 / S288c)</name>
    <name type="common">Baker's yeast</name>
    <dbReference type="NCBI Taxonomy" id="559292"/>
    <lineage>
        <taxon>Eukaryota</taxon>
        <taxon>Fungi</taxon>
        <taxon>Dikarya</taxon>
        <taxon>Ascomycota</taxon>
        <taxon>Saccharomycotina</taxon>
        <taxon>Saccharomycetes</taxon>
        <taxon>Saccharomycetales</taxon>
        <taxon>Saccharomycetaceae</taxon>
        <taxon>Saccharomyces</taxon>
    </lineage>
</organism>
<sequence length="342" mass="38570">MEENKLSGNKPIQLATWSNQMGSPENNGNNANNGSDVQNVIQKALGLIRQLNNNGLMSPMEEEHSQPSSSQETLSVDREINEQGRLRLLMQAKDDNTRKEVGTYSSPMDSAYARENMLNVLQSLVTHLNQAVSQIQQLKFKNMILTSNENNIQSRHEVEDNLQKQQFERMKCQFLLERQSLKDQLRKRENKIVKYKQKIIEKNKKLNNLAKVLNQHAISDTSQIDSFSSSVKKTPSSTTTPQEMKSDMLNTLGILATHVLKDEIDDDSGNQTILQLAAGSISNDCNTTELEITCSPEMGRTITHNRPNTKDESIQDSHGNRTLQLPKMKSFSTIDGSIKDIK</sequence>
<comment type="function">
    <text evidence="3">In concert with FKH1, plays a role in directionality of mating type switching by controlling which donor mating-type locus is inserted into MAT locus during mating type switching.</text>
</comment>
<comment type="subunit">
    <text evidence="3">Interacts with FKH1.</text>
</comment>
<comment type="disruption phenotype">
    <text evidence="3 4">Leads to a defect in donor preference during mating-type switching (PubMed:27257873). Does not affect FKH1's overlapping role with FKH2 of regulation of the expression of the CLB2 cluster of genes during the G2/M phase of the mitotic cell cycle (PubMed:27257873).</text>
</comment>
<comment type="miscellaneous">
    <text evidence="2">Present with 2120 molecules/cell in log phase SD medium.</text>
</comment>
<name>FDO1_YEAST</name>
<gene>
    <name evidence="4" type="primary">FDO1</name>
    <name type="ordered locus">YMR144W</name>
    <name type="ORF">YM9375.13</name>
</gene>
<keyword id="KW-1185">Reference proteome</keyword>
<feature type="chain" id="PRO_0000203305" description="Protein FDO1">
    <location>
        <begin position="1"/>
        <end position="342"/>
    </location>
</feature>
<feature type="region of interest" description="Disordered" evidence="1">
    <location>
        <begin position="1"/>
        <end position="36"/>
    </location>
</feature>
<feature type="region of interest" description="Disordered" evidence="1">
    <location>
        <begin position="57"/>
        <end position="76"/>
    </location>
</feature>
<feature type="region of interest" description="Disordered" evidence="1">
    <location>
        <begin position="299"/>
        <end position="322"/>
    </location>
</feature>
<feature type="compositionally biased region" description="Polar residues" evidence="1">
    <location>
        <begin position="15"/>
        <end position="25"/>
    </location>
</feature>
<feature type="compositionally biased region" description="Basic and acidic residues" evidence="1">
    <location>
        <begin position="308"/>
        <end position="319"/>
    </location>
</feature>
<dbReference type="EMBL" id="Z47071">
    <property type="protein sequence ID" value="CAA87358.1"/>
    <property type="molecule type" value="Genomic_DNA"/>
</dbReference>
<dbReference type="EMBL" id="BK006946">
    <property type="protein sequence ID" value="DAA10040.1"/>
    <property type="molecule type" value="Genomic_DNA"/>
</dbReference>
<dbReference type="PIR" id="S50400">
    <property type="entry name" value="S50400"/>
</dbReference>
<dbReference type="RefSeq" id="NP_013864.1">
    <property type="nucleotide sequence ID" value="NM_001182646.1"/>
</dbReference>
<dbReference type="SMR" id="P40214"/>
<dbReference type="BioGRID" id="35320">
    <property type="interactions" value="113"/>
</dbReference>
<dbReference type="DIP" id="DIP-4431N"/>
<dbReference type="FunCoup" id="P40214">
    <property type="interactions" value="132"/>
</dbReference>
<dbReference type="IntAct" id="P40214">
    <property type="interactions" value="5"/>
</dbReference>
<dbReference type="MINT" id="P40214"/>
<dbReference type="STRING" id="4932.YMR144W"/>
<dbReference type="iPTMnet" id="P40214"/>
<dbReference type="PaxDb" id="4932-YMR144W"/>
<dbReference type="PeptideAtlas" id="P40214"/>
<dbReference type="EnsemblFungi" id="YMR144W_mRNA">
    <property type="protein sequence ID" value="YMR144W"/>
    <property type="gene ID" value="YMR144W"/>
</dbReference>
<dbReference type="GeneID" id="855175"/>
<dbReference type="KEGG" id="sce:YMR144W"/>
<dbReference type="AGR" id="SGD:S000004752"/>
<dbReference type="SGD" id="S000004752">
    <property type="gene designation" value="FDO1"/>
</dbReference>
<dbReference type="VEuPathDB" id="FungiDB:YMR144W"/>
<dbReference type="eggNOG" id="ENOG502S148">
    <property type="taxonomic scope" value="Eukaryota"/>
</dbReference>
<dbReference type="HOGENOM" id="CLU_069850_0_0_1"/>
<dbReference type="InParanoid" id="P40214"/>
<dbReference type="OMA" id="NDCNTTE"/>
<dbReference type="OrthoDB" id="3981131at2759"/>
<dbReference type="BioCyc" id="YEAST:G3O-32836-MONOMER"/>
<dbReference type="BioGRID-ORCS" id="855175">
    <property type="hits" value="0 hits in 10 CRISPR screens"/>
</dbReference>
<dbReference type="PRO" id="PR:P40214"/>
<dbReference type="Proteomes" id="UP000002311">
    <property type="component" value="Chromosome XIII"/>
</dbReference>
<dbReference type="RNAct" id="P40214">
    <property type="molecule type" value="protein"/>
</dbReference>
<dbReference type="GO" id="GO:0005634">
    <property type="term" value="C:nucleus"/>
    <property type="evidence" value="ECO:0007005"/>
    <property type="project" value="SGD"/>
</dbReference>
<dbReference type="GO" id="GO:0007535">
    <property type="term" value="P:donor selection"/>
    <property type="evidence" value="ECO:0000315"/>
    <property type="project" value="SGD"/>
</dbReference>
<proteinExistence type="evidence at protein level"/>
<evidence type="ECO:0000256" key="1">
    <source>
        <dbReference type="SAM" id="MobiDB-lite"/>
    </source>
</evidence>
<evidence type="ECO:0000269" key="2">
    <source>
    </source>
</evidence>
<evidence type="ECO:0000269" key="3">
    <source>
    </source>
</evidence>
<evidence type="ECO:0000303" key="4">
    <source>
    </source>
</evidence>
<reference key="1">
    <citation type="journal article" date="1997" name="Nature">
        <title>The nucleotide sequence of Saccharomyces cerevisiae chromosome XIII.</title>
        <authorList>
            <person name="Bowman S."/>
            <person name="Churcher C.M."/>
            <person name="Badcock K."/>
            <person name="Brown D."/>
            <person name="Chillingworth T."/>
            <person name="Connor R."/>
            <person name="Dedman K."/>
            <person name="Devlin K."/>
            <person name="Gentles S."/>
            <person name="Hamlin N."/>
            <person name="Hunt S."/>
            <person name="Jagels K."/>
            <person name="Lye G."/>
            <person name="Moule S."/>
            <person name="Odell C."/>
            <person name="Pearson D."/>
            <person name="Rajandream M.A."/>
            <person name="Rice P."/>
            <person name="Skelton J."/>
            <person name="Walsh S.V."/>
            <person name="Whitehead S."/>
            <person name="Barrell B.G."/>
        </authorList>
    </citation>
    <scope>NUCLEOTIDE SEQUENCE [LARGE SCALE GENOMIC DNA]</scope>
    <source>
        <strain>ATCC 204508 / S288c</strain>
    </source>
</reference>
<reference key="2">
    <citation type="journal article" date="2014" name="G3 (Bethesda)">
        <title>The reference genome sequence of Saccharomyces cerevisiae: Then and now.</title>
        <authorList>
            <person name="Engel S.R."/>
            <person name="Dietrich F.S."/>
            <person name="Fisk D.G."/>
            <person name="Binkley G."/>
            <person name="Balakrishnan R."/>
            <person name="Costanzo M.C."/>
            <person name="Dwight S.S."/>
            <person name="Hitz B.C."/>
            <person name="Karra K."/>
            <person name="Nash R.S."/>
            <person name="Weng S."/>
            <person name="Wong E.D."/>
            <person name="Lloyd P."/>
            <person name="Skrzypek M.S."/>
            <person name="Miyasato S.R."/>
            <person name="Simison M."/>
            <person name="Cherry J.M."/>
        </authorList>
    </citation>
    <scope>GENOME REANNOTATION</scope>
    <source>
        <strain>ATCC 204508 / S288c</strain>
    </source>
</reference>
<reference key="3">
    <citation type="journal article" date="2003" name="Nature">
        <title>Global analysis of protein expression in yeast.</title>
        <authorList>
            <person name="Ghaemmaghami S."/>
            <person name="Huh W.-K."/>
            <person name="Bower K."/>
            <person name="Howson R.W."/>
            <person name="Belle A."/>
            <person name="Dephoure N."/>
            <person name="O'Shea E.K."/>
            <person name="Weissman J.S."/>
        </authorList>
    </citation>
    <scope>LEVEL OF PROTEIN EXPRESSION [LARGE SCALE ANALYSIS]</scope>
</reference>
<reference key="4">
    <citation type="journal article" date="2008" name="Mol. Cell. Proteomics">
        <title>A multidimensional chromatography technology for in-depth phosphoproteome analysis.</title>
        <authorList>
            <person name="Albuquerque C.P."/>
            <person name="Smolka M.B."/>
            <person name="Payne S.H."/>
            <person name="Bafna V."/>
            <person name="Eng J."/>
            <person name="Zhou H."/>
        </authorList>
    </citation>
    <scope>IDENTIFICATION BY MASS SPECTROMETRY [LARGE SCALE ANALYSIS]</scope>
</reference>
<reference key="5">
    <citation type="journal article" date="2016" name="PLoS Genet.">
        <title>Binding of the Fkh1 forkhead associated domain to a phosphopeptide within the Mph1 DNA helicase regulates mating-type switching in budding yeast.</title>
        <authorList>
            <person name="Dummer A.M."/>
            <person name="Su Z."/>
            <person name="Cherney R."/>
            <person name="Choi K."/>
            <person name="Denu J."/>
            <person name="Zhao X."/>
            <person name="Fox C.A."/>
        </authorList>
    </citation>
    <scope>FUNCTION</scope>
    <scope>INTERACTION WITH FKH1</scope>
    <scope>DISRUPTION PHENOTYPE</scope>
</reference>